<evidence type="ECO:0000255" key="1">
    <source>
        <dbReference type="HAMAP-Rule" id="MF_01318"/>
    </source>
</evidence>
<evidence type="ECO:0000305" key="2"/>
<comment type="function">
    <text evidence="1">Binds directly to 23S rRNA. The L1 stalk is quite mobile in the ribosome, and is involved in E site tRNA release.</text>
</comment>
<comment type="function">
    <text evidence="1">Protein L1 is also a translational repressor protein, it controls the translation of the L11 operon by binding to its mRNA.</text>
</comment>
<comment type="subunit">
    <text evidence="1">Part of the 50S ribosomal subunit.</text>
</comment>
<comment type="similarity">
    <text evidence="1">Belongs to the universal ribosomal protein uL1 family.</text>
</comment>
<dbReference type="EMBL" id="AP009493">
    <property type="protein sequence ID" value="BAG19702.1"/>
    <property type="molecule type" value="Genomic_DNA"/>
</dbReference>
<dbReference type="RefSeq" id="WP_003966999.1">
    <property type="nucleotide sequence ID" value="NC_010572.1"/>
</dbReference>
<dbReference type="SMR" id="B1W446"/>
<dbReference type="KEGG" id="sgr:SGR_2873"/>
<dbReference type="eggNOG" id="COG0081">
    <property type="taxonomic scope" value="Bacteria"/>
</dbReference>
<dbReference type="HOGENOM" id="CLU_062853_0_0_11"/>
<dbReference type="Proteomes" id="UP000001685">
    <property type="component" value="Chromosome"/>
</dbReference>
<dbReference type="GO" id="GO:0015934">
    <property type="term" value="C:large ribosomal subunit"/>
    <property type="evidence" value="ECO:0007669"/>
    <property type="project" value="InterPro"/>
</dbReference>
<dbReference type="GO" id="GO:0019843">
    <property type="term" value="F:rRNA binding"/>
    <property type="evidence" value="ECO:0007669"/>
    <property type="project" value="UniProtKB-UniRule"/>
</dbReference>
<dbReference type="GO" id="GO:0003735">
    <property type="term" value="F:structural constituent of ribosome"/>
    <property type="evidence" value="ECO:0007669"/>
    <property type="project" value="InterPro"/>
</dbReference>
<dbReference type="GO" id="GO:0000049">
    <property type="term" value="F:tRNA binding"/>
    <property type="evidence" value="ECO:0007669"/>
    <property type="project" value="UniProtKB-KW"/>
</dbReference>
<dbReference type="GO" id="GO:0006417">
    <property type="term" value="P:regulation of translation"/>
    <property type="evidence" value="ECO:0007669"/>
    <property type="project" value="UniProtKB-KW"/>
</dbReference>
<dbReference type="GO" id="GO:0006412">
    <property type="term" value="P:translation"/>
    <property type="evidence" value="ECO:0007669"/>
    <property type="project" value="UniProtKB-UniRule"/>
</dbReference>
<dbReference type="CDD" id="cd00403">
    <property type="entry name" value="Ribosomal_L1"/>
    <property type="match status" value="1"/>
</dbReference>
<dbReference type="FunFam" id="3.40.50.790:FF:000001">
    <property type="entry name" value="50S ribosomal protein L1"/>
    <property type="match status" value="1"/>
</dbReference>
<dbReference type="Gene3D" id="3.30.190.20">
    <property type="match status" value="1"/>
</dbReference>
<dbReference type="Gene3D" id="3.40.50.790">
    <property type="match status" value="1"/>
</dbReference>
<dbReference type="HAMAP" id="MF_01318_B">
    <property type="entry name" value="Ribosomal_uL1_B"/>
    <property type="match status" value="1"/>
</dbReference>
<dbReference type="InterPro" id="IPR005878">
    <property type="entry name" value="Ribosom_uL1_bac-type"/>
</dbReference>
<dbReference type="InterPro" id="IPR002143">
    <property type="entry name" value="Ribosomal_uL1"/>
</dbReference>
<dbReference type="InterPro" id="IPR023674">
    <property type="entry name" value="Ribosomal_uL1-like"/>
</dbReference>
<dbReference type="InterPro" id="IPR028364">
    <property type="entry name" value="Ribosomal_uL1/biogenesis"/>
</dbReference>
<dbReference type="InterPro" id="IPR016095">
    <property type="entry name" value="Ribosomal_uL1_3-a/b-sand"/>
</dbReference>
<dbReference type="InterPro" id="IPR023673">
    <property type="entry name" value="Ribosomal_uL1_CS"/>
</dbReference>
<dbReference type="NCBIfam" id="TIGR01169">
    <property type="entry name" value="rplA_bact"/>
    <property type="match status" value="1"/>
</dbReference>
<dbReference type="PANTHER" id="PTHR36427">
    <property type="entry name" value="54S RIBOSOMAL PROTEIN L1, MITOCHONDRIAL"/>
    <property type="match status" value="1"/>
</dbReference>
<dbReference type="PANTHER" id="PTHR36427:SF3">
    <property type="entry name" value="LARGE RIBOSOMAL SUBUNIT PROTEIN UL1M"/>
    <property type="match status" value="1"/>
</dbReference>
<dbReference type="Pfam" id="PF00687">
    <property type="entry name" value="Ribosomal_L1"/>
    <property type="match status" value="1"/>
</dbReference>
<dbReference type="PIRSF" id="PIRSF002155">
    <property type="entry name" value="Ribosomal_L1"/>
    <property type="match status" value="1"/>
</dbReference>
<dbReference type="SUPFAM" id="SSF56808">
    <property type="entry name" value="Ribosomal protein L1"/>
    <property type="match status" value="1"/>
</dbReference>
<dbReference type="PROSITE" id="PS01199">
    <property type="entry name" value="RIBOSOMAL_L1"/>
    <property type="match status" value="1"/>
</dbReference>
<feature type="chain" id="PRO_1000141464" description="Large ribosomal subunit protein uL1">
    <location>
        <begin position="1"/>
        <end position="240"/>
    </location>
</feature>
<sequence length="240" mass="25654">MKRSKNLRAADAKVDRERNYAPLEAVRLAKETSSTKFDGTVEVAFALGVDPRKADQMVRGTVNLPHGTGKTARVLVFATGDRAAAAEAAGADIVGADELIDEVAKGRLDFDAVVATPDLMGKVGRLGRVLGPRGLMPNPKTGTVTPDVVKAVNDIKGGKIEFRVDKHSNLHFIIGKVSFDETKLVENYAAALEEILRLKPSAAKGRYIKKATLATTMGPGIPLDANRTRNLLVEEDPASV</sequence>
<reference key="1">
    <citation type="journal article" date="2008" name="J. Bacteriol.">
        <title>Genome sequence of the streptomycin-producing microorganism Streptomyces griseus IFO 13350.</title>
        <authorList>
            <person name="Ohnishi Y."/>
            <person name="Ishikawa J."/>
            <person name="Hara H."/>
            <person name="Suzuki H."/>
            <person name="Ikenoya M."/>
            <person name="Ikeda H."/>
            <person name="Yamashita A."/>
            <person name="Hattori M."/>
            <person name="Horinouchi S."/>
        </authorList>
    </citation>
    <scope>NUCLEOTIDE SEQUENCE [LARGE SCALE GENOMIC DNA]</scope>
    <source>
        <strain>JCM 4626 / CBS 651.72 / NBRC 13350 / KCC S-0626 / ISP 5235</strain>
    </source>
</reference>
<accession>B1W446</accession>
<proteinExistence type="inferred from homology"/>
<organism>
    <name type="scientific">Streptomyces griseus subsp. griseus (strain JCM 4626 / CBS 651.72 / NBRC 13350 / KCC S-0626 / ISP 5235)</name>
    <dbReference type="NCBI Taxonomy" id="455632"/>
    <lineage>
        <taxon>Bacteria</taxon>
        <taxon>Bacillati</taxon>
        <taxon>Actinomycetota</taxon>
        <taxon>Actinomycetes</taxon>
        <taxon>Kitasatosporales</taxon>
        <taxon>Streptomycetaceae</taxon>
        <taxon>Streptomyces</taxon>
    </lineage>
</organism>
<gene>
    <name evidence="1" type="primary">rplA</name>
    <name type="ordered locus">SGR_2873</name>
</gene>
<name>RL1_STRGG</name>
<protein>
    <recommendedName>
        <fullName evidence="1">Large ribosomal subunit protein uL1</fullName>
    </recommendedName>
    <alternativeName>
        <fullName evidence="2">50S ribosomal protein L1</fullName>
    </alternativeName>
</protein>
<keyword id="KW-0678">Repressor</keyword>
<keyword id="KW-0687">Ribonucleoprotein</keyword>
<keyword id="KW-0689">Ribosomal protein</keyword>
<keyword id="KW-0694">RNA-binding</keyword>
<keyword id="KW-0699">rRNA-binding</keyword>
<keyword id="KW-0810">Translation regulation</keyword>
<keyword id="KW-0820">tRNA-binding</keyword>